<accession>Q7VRT4</accession>
<protein>
    <recommendedName>
        <fullName evidence="2">Transaldolase</fullName>
        <ecNumber evidence="2">2.2.1.2</ecNumber>
    </recommendedName>
</protein>
<comment type="function">
    <text evidence="2">Transaldolase is important for the balance of metabolites in the pentose-phosphate pathway.</text>
</comment>
<comment type="catalytic activity">
    <reaction evidence="2">
        <text>D-sedoheptulose 7-phosphate + D-glyceraldehyde 3-phosphate = D-erythrose 4-phosphate + beta-D-fructose 6-phosphate</text>
        <dbReference type="Rhea" id="RHEA:17053"/>
        <dbReference type="ChEBI" id="CHEBI:16897"/>
        <dbReference type="ChEBI" id="CHEBI:57483"/>
        <dbReference type="ChEBI" id="CHEBI:57634"/>
        <dbReference type="ChEBI" id="CHEBI:59776"/>
        <dbReference type="EC" id="2.2.1.2"/>
    </reaction>
</comment>
<comment type="pathway">
    <text evidence="2">Carbohydrate degradation; pentose phosphate pathway; D-glyceraldehyde 3-phosphate and beta-D-fructose 6-phosphate from D-ribose 5-phosphate and D-xylulose 5-phosphate (non-oxidative stage): step 2/3.</text>
</comment>
<comment type="subunit">
    <text evidence="1">Homodimer.</text>
</comment>
<comment type="subcellular location">
    <subcellularLocation>
        <location evidence="2">Cytoplasm</location>
    </subcellularLocation>
</comment>
<comment type="similarity">
    <text evidence="2">Belongs to the transaldolase family. Type 1 subfamily.</text>
</comment>
<keyword id="KW-0963">Cytoplasm</keyword>
<keyword id="KW-0570">Pentose shunt</keyword>
<keyword id="KW-1185">Reference proteome</keyword>
<keyword id="KW-0704">Schiff base</keyword>
<keyword id="KW-0808">Transferase</keyword>
<reference key="1">
    <citation type="journal article" date="2003" name="Proc. Natl. Acad. Sci. U.S.A.">
        <title>The genome sequence of Blochmannia floridanus: comparative analysis of reduced genomes.</title>
        <authorList>
            <person name="Gil R."/>
            <person name="Silva F.J."/>
            <person name="Zientz E."/>
            <person name="Delmotte F."/>
            <person name="Gonzalez-Candelas F."/>
            <person name="Latorre A."/>
            <person name="Rausell C."/>
            <person name="Kamerbeek J."/>
            <person name="Gadau J."/>
            <person name="Hoelldobler B."/>
            <person name="van Ham R.C.H.J."/>
            <person name="Gross R."/>
            <person name="Moya A."/>
        </authorList>
    </citation>
    <scope>NUCLEOTIDE SEQUENCE [LARGE SCALE GENOMIC DNA]</scope>
</reference>
<feature type="chain" id="PRO_0000173585" description="Transaldolase">
    <location>
        <begin position="1"/>
        <end position="323"/>
    </location>
</feature>
<feature type="active site" description="Schiff-base intermediate with substrate" evidence="2">
    <location>
        <position position="131"/>
    </location>
</feature>
<evidence type="ECO:0000250" key="1"/>
<evidence type="ECO:0000255" key="2">
    <source>
        <dbReference type="HAMAP-Rule" id="MF_00492"/>
    </source>
</evidence>
<organism>
    <name type="scientific">Blochmanniella floridana</name>
    <dbReference type="NCBI Taxonomy" id="203907"/>
    <lineage>
        <taxon>Bacteria</taxon>
        <taxon>Pseudomonadati</taxon>
        <taxon>Pseudomonadota</taxon>
        <taxon>Gammaproteobacteria</taxon>
        <taxon>Enterobacterales</taxon>
        <taxon>Enterobacteriaceae</taxon>
        <taxon>ant endosymbionts</taxon>
        <taxon>Candidatus Blochmanniella</taxon>
    </lineage>
</organism>
<sequence length="323" mass="37008">MNQLDNLKKFSKISADTGDVDLIRTYQIQHATTNPSLILKSPLFTTYLKLFNDAIDYAQKIGGNQNTKITNASDRLIVNIGSEILANISGYISTEIDAQLSFNTDLTIKKAHKLITMYQKKNIDTSRVLIKIAATWEGIQAAEELEKSGIKCNLTLVFSFAQARACAERNIYLISPFIGRIYDWYNQRNLIKTSYINDDPGIQSIKKIYHYYKTYGYNTIIMGASFRRLEQILALSGCDYLTISPHFLKQLYQNTNSVTRQLFPPKTIISHHIPVLDQSEFFQEHNKNQMAVEKLNEGIQQFSIDQQKLHKLLLNNLNVQLQK</sequence>
<dbReference type="EC" id="2.2.1.2" evidence="2"/>
<dbReference type="EMBL" id="BX248583">
    <property type="protein sequence ID" value="CAD83201.1"/>
    <property type="molecule type" value="Genomic_DNA"/>
</dbReference>
<dbReference type="SMR" id="Q7VRT4"/>
<dbReference type="STRING" id="203907.Bfl515"/>
<dbReference type="KEGG" id="bfl:Bfl515"/>
<dbReference type="eggNOG" id="COG0176">
    <property type="taxonomic scope" value="Bacteria"/>
</dbReference>
<dbReference type="HOGENOM" id="CLU_047470_0_1_6"/>
<dbReference type="OrthoDB" id="9809101at2"/>
<dbReference type="UniPathway" id="UPA00115">
    <property type="reaction ID" value="UER00414"/>
</dbReference>
<dbReference type="Proteomes" id="UP000002192">
    <property type="component" value="Chromosome"/>
</dbReference>
<dbReference type="GO" id="GO:0005829">
    <property type="term" value="C:cytosol"/>
    <property type="evidence" value="ECO:0007669"/>
    <property type="project" value="TreeGrafter"/>
</dbReference>
<dbReference type="GO" id="GO:0004801">
    <property type="term" value="F:transaldolase activity"/>
    <property type="evidence" value="ECO:0000250"/>
    <property type="project" value="UniProtKB"/>
</dbReference>
<dbReference type="GO" id="GO:0005975">
    <property type="term" value="P:carbohydrate metabolic process"/>
    <property type="evidence" value="ECO:0007669"/>
    <property type="project" value="InterPro"/>
</dbReference>
<dbReference type="GO" id="GO:0006098">
    <property type="term" value="P:pentose-phosphate shunt"/>
    <property type="evidence" value="ECO:0007669"/>
    <property type="project" value="UniProtKB-UniRule"/>
</dbReference>
<dbReference type="CDD" id="cd00957">
    <property type="entry name" value="Transaldolase_TalAB"/>
    <property type="match status" value="1"/>
</dbReference>
<dbReference type="Gene3D" id="3.20.20.70">
    <property type="entry name" value="Aldolase class I"/>
    <property type="match status" value="1"/>
</dbReference>
<dbReference type="HAMAP" id="MF_00492">
    <property type="entry name" value="Transaldolase_1"/>
    <property type="match status" value="1"/>
</dbReference>
<dbReference type="InterPro" id="IPR013785">
    <property type="entry name" value="Aldolase_TIM"/>
</dbReference>
<dbReference type="InterPro" id="IPR001585">
    <property type="entry name" value="TAL/FSA"/>
</dbReference>
<dbReference type="InterPro" id="IPR004730">
    <property type="entry name" value="Transaldolase_1"/>
</dbReference>
<dbReference type="InterPro" id="IPR018225">
    <property type="entry name" value="Transaldolase_AS"/>
</dbReference>
<dbReference type="NCBIfam" id="NF009001">
    <property type="entry name" value="PRK12346.1"/>
    <property type="match status" value="1"/>
</dbReference>
<dbReference type="NCBIfam" id="TIGR00874">
    <property type="entry name" value="talAB"/>
    <property type="match status" value="1"/>
</dbReference>
<dbReference type="PANTHER" id="PTHR10683">
    <property type="entry name" value="TRANSALDOLASE"/>
    <property type="match status" value="1"/>
</dbReference>
<dbReference type="PANTHER" id="PTHR10683:SF16">
    <property type="entry name" value="TRANSALDOLASE A"/>
    <property type="match status" value="1"/>
</dbReference>
<dbReference type="Pfam" id="PF00923">
    <property type="entry name" value="TAL_FSA"/>
    <property type="match status" value="1"/>
</dbReference>
<dbReference type="SUPFAM" id="SSF51569">
    <property type="entry name" value="Aldolase"/>
    <property type="match status" value="1"/>
</dbReference>
<dbReference type="PROSITE" id="PS01054">
    <property type="entry name" value="TRANSALDOLASE_1"/>
    <property type="match status" value="1"/>
</dbReference>
<dbReference type="PROSITE" id="PS00958">
    <property type="entry name" value="TRANSALDOLASE_2"/>
    <property type="match status" value="1"/>
</dbReference>
<name>TAL_BLOFL</name>
<gene>
    <name evidence="2" type="primary">tal</name>
    <name type="synonym">talA</name>
    <name type="ordered locus">Bfl515</name>
</gene>
<proteinExistence type="inferred from homology"/>